<dbReference type="EC" id="2.1.1.-" evidence="1"/>
<dbReference type="EMBL" id="CP000551">
    <property type="protein sequence ID" value="ABM70960.1"/>
    <property type="molecule type" value="Genomic_DNA"/>
</dbReference>
<dbReference type="RefSeq" id="WP_011819088.1">
    <property type="nucleotide sequence ID" value="NC_008816.1"/>
</dbReference>
<dbReference type="SMR" id="A2BT49"/>
<dbReference type="STRING" id="146891.A9601_16771"/>
<dbReference type="KEGG" id="pmb:A9601_16771"/>
<dbReference type="eggNOG" id="COG0357">
    <property type="taxonomic scope" value="Bacteria"/>
</dbReference>
<dbReference type="HOGENOM" id="CLU_065341_0_2_3"/>
<dbReference type="OrthoDB" id="9808773at2"/>
<dbReference type="Proteomes" id="UP000002590">
    <property type="component" value="Chromosome"/>
</dbReference>
<dbReference type="GO" id="GO:0005829">
    <property type="term" value="C:cytosol"/>
    <property type="evidence" value="ECO:0007669"/>
    <property type="project" value="TreeGrafter"/>
</dbReference>
<dbReference type="GO" id="GO:0070043">
    <property type="term" value="F:rRNA (guanine-N7-)-methyltransferase activity"/>
    <property type="evidence" value="ECO:0007669"/>
    <property type="project" value="UniProtKB-UniRule"/>
</dbReference>
<dbReference type="Gene3D" id="3.40.50.150">
    <property type="entry name" value="Vaccinia Virus protein VP39"/>
    <property type="match status" value="1"/>
</dbReference>
<dbReference type="HAMAP" id="MF_00074">
    <property type="entry name" value="16SrRNA_methyltr_G"/>
    <property type="match status" value="1"/>
</dbReference>
<dbReference type="InterPro" id="IPR003682">
    <property type="entry name" value="rRNA_ssu_MeTfrase_G"/>
</dbReference>
<dbReference type="InterPro" id="IPR029063">
    <property type="entry name" value="SAM-dependent_MTases_sf"/>
</dbReference>
<dbReference type="NCBIfam" id="TIGR00138">
    <property type="entry name" value="rsmG_gidB"/>
    <property type="match status" value="1"/>
</dbReference>
<dbReference type="PANTHER" id="PTHR31760">
    <property type="entry name" value="S-ADENOSYL-L-METHIONINE-DEPENDENT METHYLTRANSFERASES SUPERFAMILY PROTEIN"/>
    <property type="match status" value="1"/>
</dbReference>
<dbReference type="PANTHER" id="PTHR31760:SF0">
    <property type="entry name" value="S-ADENOSYL-L-METHIONINE-DEPENDENT METHYLTRANSFERASES SUPERFAMILY PROTEIN"/>
    <property type="match status" value="1"/>
</dbReference>
<dbReference type="Pfam" id="PF02527">
    <property type="entry name" value="GidB"/>
    <property type="match status" value="1"/>
</dbReference>
<dbReference type="PIRSF" id="PIRSF003078">
    <property type="entry name" value="GidB"/>
    <property type="match status" value="1"/>
</dbReference>
<dbReference type="SUPFAM" id="SSF53335">
    <property type="entry name" value="S-adenosyl-L-methionine-dependent methyltransferases"/>
    <property type="match status" value="1"/>
</dbReference>
<keyword id="KW-0963">Cytoplasm</keyword>
<keyword id="KW-0489">Methyltransferase</keyword>
<keyword id="KW-0698">rRNA processing</keyword>
<keyword id="KW-0949">S-adenosyl-L-methionine</keyword>
<keyword id="KW-0808">Transferase</keyword>
<name>RSMG_PROMS</name>
<evidence type="ECO:0000255" key="1">
    <source>
        <dbReference type="HAMAP-Rule" id="MF_00074"/>
    </source>
</evidence>
<comment type="function">
    <text evidence="1">Specifically methylates the N7 position of a guanine in 16S rRNA.</text>
</comment>
<comment type="subcellular location">
    <subcellularLocation>
        <location evidence="1">Cytoplasm</location>
    </subcellularLocation>
</comment>
<comment type="similarity">
    <text evidence="1">Belongs to the methyltransferase superfamily. RNA methyltransferase RsmG family.</text>
</comment>
<feature type="chain" id="PRO_1000010181" description="Ribosomal RNA small subunit methyltransferase G">
    <location>
        <begin position="1"/>
        <end position="237"/>
    </location>
</feature>
<feature type="binding site" evidence="1">
    <location>
        <position position="76"/>
    </location>
    <ligand>
        <name>S-adenosyl-L-methionine</name>
        <dbReference type="ChEBI" id="CHEBI:59789"/>
    </ligand>
</feature>
<feature type="binding site" evidence="1">
    <location>
        <position position="81"/>
    </location>
    <ligand>
        <name>S-adenosyl-L-methionine</name>
        <dbReference type="ChEBI" id="CHEBI:59789"/>
    </ligand>
</feature>
<feature type="binding site" evidence="1">
    <location>
        <begin position="128"/>
        <end position="129"/>
    </location>
    <ligand>
        <name>S-adenosyl-L-methionine</name>
        <dbReference type="ChEBI" id="CHEBI:59789"/>
    </ligand>
</feature>
<feature type="binding site" evidence="1">
    <location>
        <position position="147"/>
    </location>
    <ligand>
        <name>S-adenosyl-L-methionine</name>
        <dbReference type="ChEBI" id="CHEBI:59789"/>
    </ligand>
</feature>
<proteinExistence type="inferred from homology"/>
<reference key="1">
    <citation type="journal article" date="2007" name="PLoS Genet.">
        <title>Patterns and implications of gene gain and loss in the evolution of Prochlorococcus.</title>
        <authorList>
            <person name="Kettler G.C."/>
            <person name="Martiny A.C."/>
            <person name="Huang K."/>
            <person name="Zucker J."/>
            <person name="Coleman M.L."/>
            <person name="Rodrigue S."/>
            <person name="Chen F."/>
            <person name="Lapidus A."/>
            <person name="Ferriera S."/>
            <person name="Johnson J."/>
            <person name="Steglich C."/>
            <person name="Church G.M."/>
            <person name="Richardson P."/>
            <person name="Chisholm S.W."/>
        </authorList>
    </citation>
    <scope>NUCLEOTIDE SEQUENCE [LARGE SCALE GENOMIC DNA]</scope>
    <source>
        <strain>AS9601</strain>
    </source>
</reference>
<gene>
    <name evidence="1" type="primary">rsmG</name>
    <name type="ordered locus">A9601_16771</name>
</gene>
<protein>
    <recommendedName>
        <fullName evidence="1">Ribosomal RNA small subunit methyltransferase G</fullName>
        <ecNumber evidence="1">2.1.1.-</ecNumber>
    </recommendedName>
    <alternativeName>
        <fullName evidence="1">16S rRNA 7-methylguanosine methyltransferase</fullName>
        <shortName evidence="1">16S rRNA m7G methyltransferase</shortName>
    </alternativeName>
</protein>
<organism>
    <name type="scientific">Prochlorococcus marinus (strain AS9601)</name>
    <dbReference type="NCBI Taxonomy" id="146891"/>
    <lineage>
        <taxon>Bacteria</taxon>
        <taxon>Bacillati</taxon>
        <taxon>Cyanobacteriota</taxon>
        <taxon>Cyanophyceae</taxon>
        <taxon>Synechococcales</taxon>
        <taxon>Prochlorococcaceae</taxon>
        <taxon>Prochlorococcus</taxon>
    </lineage>
</organism>
<accession>A2BT49</accession>
<sequence>MKKQNIPEEILSLITEEEINLFQELQIKIKELNNKTNLTRLTDGDDYWVSQVFDSIWPFKAFTNINFDNKKFLDIGSGCGFPGLAYAITHPNSEIYLIDSLKKKTDAIKILVEQINFKNNIHVINDRVENLAHQSSMRNNFNIATTRAVSNPSTVSEYILPMLKKEGFGVLYCGKWTNQESKNLDKTLEILEGKVKDKKEILLPRNKGTRNIILIQSKNFCPEIYPRKVGKPEKNPL</sequence>